<protein>
    <recommendedName>
        <fullName evidence="1">Large ribosomal subunit protein uL13</fullName>
    </recommendedName>
    <alternativeName>
        <fullName evidence="2">50S ribosomal protein L13</fullName>
    </alternativeName>
</protein>
<accession>A1VJJ3</accession>
<evidence type="ECO:0000255" key="1">
    <source>
        <dbReference type="HAMAP-Rule" id="MF_01366"/>
    </source>
</evidence>
<evidence type="ECO:0000305" key="2"/>
<organism>
    <name type="scientific">Polaromonas naphthalenivorans (strain CJ2)</name>
    <dbReference type="NCBI Taxonomy" id="365044"/>
    <lineage>
        <taxon>Bacteria</taxon>
        <taxon>Pseudomonadati</taxon>
        <taxon>Pseudomonadota</taxon>
        <taxon>Betaproteobacteria</taxon>
        <taxon>Burkholderiales</taxon>
        <taxon>Comamonadaceae</taxon>
        <taxon>Polaromonas</taxon>
    </lineage>
</organism>
<reference key="1">
    <citation type="journal article" date="2009" name="Environ. Microbiol.">
        <title>The genome of Polaromonas naphthalenivorans strain CJ2, isolated from coal tar-contaminated sediment, reveals physiological and metabolic versatility and evolution through extensive horizontal gene transfer.</title>
        <authorList>
            <person name="Yagi J.M."/>
            <person name="Sims D."/>
            <person name="Brettin T."/>
            <person name="Bruce D."/>
            <person name="Madsen E.L."/>
        </authorList>
    </citation>
    <scope>NUCLEOTIDE SEQUENCE [LARGE SCALE GENOMIC DNA]</scope>
    <source>
        <strain>CJ2</strain>
    </source>
</reference>
<name>RL13_POLNA</name>
<keyword id="KW-1185">Reference proteome</keyword>
<keyword id="KW-0687">Ribonucleoprotein</keyword>
<keyword id="KW-0689">Ribosomal protein</keyword>
<feature type="chain" id="PRO_1000055431" description="Large ribosomal subunit protein uL13">
    <location>
        <begin position="1"/>
        <end position="147"/>
    </location>
</feature>
<gene>
    <name evidence="1" type="primary">rplM</name>
    <name type="ordered locus">Pnap_0500</name>
</gene>
<proteinExistence type="inferred from homology"/>
<sequence>MKTFSAKPADVTHEWFVIDATDKVLGRVASEVALRLRGKHKAIYTPHVDTGDFIVIINAAQLRVTGAKSTDKIYYRHSGYPGGITATNFRDMQTKFPGRALEKAVKGMLPKGPLGYAMIKKLKVYGGAEHPHTAQQPKVLEIAGAAK</sequence>
<dbReference type="EMBL" id="CP000529">
    <property type="protein sequence ID" value="ABM35821.1"/>
    <property type="molecule type" value="Genomic_DNA"/>
</dbReference>
<dbReference type="RefSeq" id="WP_011799921.1">
    <property type="nucleotide sequence ID" value="NC_008781.1"/>
</dbReference>
<dbReference type="SMR" id="A1VJJ3"/>
<dbReference type="STRING" id="365044.Pnap_0500"/>
<dbReference type="KEGG" id="pna:Pnap_0500"/>
<dbReference type="eggNOG" id="COG0102">
    <property type="taxonomic scope" value="Bacteria"/>
</dbReference>
<dbReference type="HOGENOM" id="CLU_082184_2_2_4"/>
<dbReference type="OrthoDB" id="9801330at2"/>
<dbReference type="Proteomes" id="UP000000644">
    <property type="component" value="Chromosome"/>
</dbReference>
<dbReference type="GO" id="GO:0022625">
    <property type="term" value="C:cytosolic large ribosomal subunit"/>
    <property type="evidence" value="ECO:0007669"/>
    <property type="project" value="TreeGrafter"/>
</dbReference>
<dbReference type="GO" id="GO:0003729">
    <property type="term" value="F:mRNA binding"/>
    <property type="evidence" value="ECO:0007669"/>
    <property type="project" value="TreeGrafter"/>
</dbReference>
<dbReference type="GO" id="GO:0003735">
    <property type="term" value="F:structural constituent of ribosome"/>
    <property type="evidence" value="ECO:0007669"/>
    <property type="project" value="InterPro"/>
</dbReference>
<dbReference type="GO" id="GO:0017148">
    <property type="term" value="P:negative regulation of translation"/>
    <property type="evidence" value="ECO:0007669"/>
    <property type="project" value="TreeGrafter"/>
</dbReference>
<dbReference type="GO" id="GO:0006412">
    <property type="term" value="P:translation"/>
    <property type="evidence" value="ECO:0007669"/>
    <property type="project" value="UniProtKB-UniRule"/>
</dbReference>
<dbReference type="CDD" id="cd00392">
    <property type="entry name" value="Ribosomal_L13"/>
    <property type="match status" value="1"/>
</dbReference>
<dbReference type="FunFam" id="3.90.1180.10:FF:000001">
    <property type="entry name" value="50S ribosomal protein L13"/>
    <property type="match status" value="1"/>
</dbReference>
<dbReference type="Gene3D" id="3.90.1180.10">
    <property type="entry name" value="Ribosomal protein L13"/>
    <property type="match status" value="1"/>
</dbReference>
<dbReference type="HAMAP" id="MF_01366">
    <property type="entry name" value="Ribosomal_uL13"/>
    <property type="match status" value="1"/>
</dbReference>
<dbReference type="InterPro" id="IPR005822">
    <property type="entry name" value="Ribosomal_uL13"/>
</dbReference>
<dbReference type="InterPro" id="IPR005823">
    <property type="entry name" value="Ribosomal_uL13_bac-type"/>
</dbReference>
<dbReference type="InterPro" id="IPR036899">
    <property type="entry name" value="Ribosomal_uL13_sf"/>
</dbReference>
<dbReference type="NCBIfam" id="TIGR01066">
    <property type="entry name" value="rplM_bact"/>
    <property type="match status" value="1"/>
</dbReference>
<dbReference type="PANTHER" id="PTHR11545:SF2">
    <property type="entry name" value="LARGE RIBOSOMAL SUBUNIT PROTEIN UL13M"/>
    <property type="match status" value="1"/>
</dbReference>
<dbReference type="PANTHER" id="PTHR11545">
    <property type="entry name" value="RIBOSOMAL PROTEIN L13"/>
    <property type="match status" value="1"/>
</dbReference>
<dbReference type="Pfam" id="PF00572">
    <property type="entry name" value="Ribosomal_L13"/>
    <property type="match status" value="1"/>
</dbReference>
<dbReference type="PIRSF" id="PIRSF002181">
    <property type="entry name" value="Ribosomal_L13"/>
    <property type="match status" value="1"/>
</dbReference>
<dbReference type="SUPFAM" id="SSF52161">
    <property type="entry name" value="Ribosomal protein L13"/>
    <property type="match status" value="1"/>
</dbReference>
<comment type="function">
    <text evidence="1">This protein is one of the early assembly proteins of the 50S ribosomal subunit, although it is not seen to bind rRNA by itself. It is important during the early stages of 50S assembly.</text>
</comment>
<comment type="subunit">
    <text evidence="1">Part of the 50S ribosomal subunit.</text>
</comment>
<comment type="similarity">
    <text evidence="1">Belongs to the universal ribosomal protein uL13 family.</text>
</comment>